<keyword id="KW-0903">Direct protein sequencing</keyword>
<keyword id="KW-0326">Glycosidase</keyword>
<keyword id="KW-0378">Hydrolase</keyword>
<keyword id="KW-1185">Reference proteome</keyword>
<keyword id="KW-0964">Secreted</keyword>
<keyword id="KW-0732">Signal</keyword>
<name>AGAR_STRCO</name>
<sequence length="309" mass="35164">MVNRRDLIKWSAVALGAGAGLAGPAPAAHAADLEWEQYPVPAAPGGNRSWQLLPSHSDDFNYTGKPQTFRGRWLDQHKDGWSGPANSLYSARHSWVADGNLIVEGRRAPDGRVYCGYVTSRTPVEYPLYTEVLMRVSGLKLSSNFWLLSRDDVNEIDVIECYGNESLHGKHMNTAYHIFQRNPFTELARSQKGYFADGSYGYNGETGQVFGDGAGQPLLRNGFHRYGVHWISATEFDFYFNGRLVRRLNRSNDLRDPRSRFFDQPMHLILNTESHQWRVDRGIEPTDAELADPSINNIYYRWVRTYQAV</sequence>
<protein>
    <recommendedName>
        <fullName>Extracellular agarase</fullName>
        <ecNumber>3.2.1.81</ecNumber>
    </recommendedName>
</protein>
<comment type="catalytic activity">
    <reaction>
        <text>Hydrolysis of (1-&gt;4)-beta-D-galactosidic linkages in agarose, giving the tetramer as the predominant product.</text>
        <dbReference type="EC" id="3.2.1.81"/>
    </reaction>
</comment>
<comment type="subcellular location">
    <subcellularLocation>
        <location>Secreted</location>
    </subcellularLocation>
</comment>
<comment type="PTM">
    <text>Predicted to be exported by the Tat system. The position of the signal peptide cleavage has been experimentally proven.</text>
</comment>
<comment type="similarity">
    <text evidence="5">Belongs to the glycosyl hydrolase 16 family.</text>
</comment>
<accession>P07883</accession>
<evidence type="ECO:0000255" key="1">
    <source>
        <dbReference type="PROSITE-ProRule" id="PRU00648"/>
    </source>
</evidence>
<evidence type="ECO:0000255" key="2">
    <source>
        <dbReference type="PROSITE-ProRule" id="PRU01098"/>
    </source>
</evidence>
<evidence type="ECO:0000255" key="3">
    <source>
        <dbReference type="PROSITE-ProRule" id="PRU10064"/>
    </source>
</evidence>
<evidence type="ECO:0000269" key="4">
    <source>
    </source>
</evidence>
<evidence type="ECO:0000305" key="5"/>
<organism>
    <name type="scientific">Streptomyces coelicolor (strain ATCC BAA-471 / A3(2) / M145)</name>
    <dbReference type="NCBI Taxonomy" id="100226"/>
    <lineage>
        <taxon>Bacteria</taxon>
        <taxon>Bacillati</taxon>
        <taxon>Actinomycetota</taxon>
        <taxon>Actinomycetes</taxon>
        <taxon>Kitasatosporales</taxon>
        <taxon>Streptomycetaceae</taxon>
        <taxon>Streptomyces</taxon>
        <taxon>Streptomyces albidoflavus group</taxon>
    </lineage>
</organism>
<gene>
    <name type="primary">dagA</name>
    <name type="ordered locus">SCO3471</name>
    <name type="ORF">SCE65.07c</name>
</gene>
<feature type="signal peptide" description="Tat-type signal" evidence="1 4">
    <location>
        <begin position="1"/>
        <end position="30"/>
    </location>
</feature>
<feature type="chain" id="PRO_0000011797" description="Extracellular agarase">
    <location>
        <begin position="31"/>
        <end position="309"/>
    </location>
</feature>
<feature type="domain" description="GH16" evidence="2">
    <location>
        <begin position="33"/>
        <end position="309"/>
    </location>
</feature>
<feature type="active site" description="Nucleophile" evidence="3">
    <location>
        <position position="155"/>
    </location>
</feature>
<feature type="active site" description="Proton donor" evidence="3">
    <location>
        <position position="160"/>
    </location>
</feature>
<proteinExistence type="evidence at protein level"/>
<dbReference type="EC" id="3.2.1.81"/>
<dbReference type="EMBL" id="X05811">
    <property type="protein sequence ID" value="CAA29257.1"/>
    <property type="molecule type" value="Genomic_DNA"/>
</dbReference>
<dbReference type="EMBL" id="AL939116">
    <property type="protein sequence ID" value="CAB61795.1"/>
    <property type="molecule type" value="Genomic_DNA"/>
</dbReference>
<dbReference type="PIR" id="S07322">
    <property type="entry name" value="EUSMAG"/>
</dbReference>
<dbReference type="RefSeq" id="NP_627674.1">
    <property type="nucleotide sequence ID" value="NC_003888.3"/>
</dbReference>
<dbReference type="RefSeq" id="WP_011029010.1">
    <property type="nucleotide sequence ID" value="NZ_VNID01000041.1"/>
</dbReference>
<dbReference type="SMR" id="P07883"/>
<dbReference type="STRING" id="100226.gene:17761093"/>
<dbReference type="CAZy" id="GH16">
    <property type="family name" value="Glycoside Hydrolase Family 16"/>
</dbReference>
<dbReference type="PaxDb" id="100226-SCO3471"/>
<dbReference type="KEGG" id="sco:SCO3471"/>
<dbReference type="PATRIC" id="fig|100226.15.peg.3531"/>
<dbReference type="eggNOG" id="COG2273">
    <property type="taxonomic scope" value="Bacteria"/>
</dbReference>
<dbReference type="HOGENOM" id="CLU_037753_0_0_11"/>
<dbReference type="InParanoid" id="P07883"/>
<dbReference type="OrthoDB" id="9809583at2"/>
<dbReference type="Proteomes" id="UP000001973">
    <property type="component" value="Chromosome"/>
</dbReference>
<dbReference type="GO" id="GO:0005576">
    <property type="term" value="C:extracellular region"/>
    <property type="evidence" value="ECO:0007669"/>
    <property type="project" value="UniProtKB-SubCell"/>
</dbReference>
<dbReference type="GO" id="GO:0033916">
    <property type="term" value="F:beta-agarase activity"/>
    <property type="evidence" value="ECO:0007669"/>
    <property type="project" value="UniProtKB-EC"/>
</dbReference>
<dbReference type="GO" id="GO:0005975">
    <property type="term" value="P:carbohydrate metabolic process"/>
    <property type="evidence" value="ECO:0007669"/>
    <property type="project" value="InterPro"/>
</dbReference>
<dbReference type="CDD" id="cd02178">
    <property type="entry name" value="GH16_beta_agarase"/>
    <property type="match status" value="1"/>
</dbReference>
<dbReference type="Gene3D" id="2.60.120.200">
    <property type="match status" value="1"/>
</dbReference>
<dbReference type="InterPro" id="IPR016287">
    <property type="entry name" value="Beta_agarase"/>
</dbReference>
<dbReference type="InterPro" id="IPR013320">
    <property type="entry name" value="ConA-like_dom_sf"/>
</dbReference>
<dbReference type="InterPro" id="IPR000757">
    <property type="entry name" value="GH16"/>
</dbReference>
<dbReference type="InterPro" id="IPR008263">
    <property type="entry name" value="GH16_AS"/>
</dbReference>
<dbReference type="InterPro" id="IPR050546">
    <property type="entry name" value="Glycosyl_Hydrlase_16"/>
</dbReference>
<dbReference type="InterPro" id="IPR006311">
    <property type="entry name" value="TAT_signal"/>
</dbReference>
<dbReference type="PANTHER" id="PTHR10963:SF55">
    <property type="entry name" value="GLYCOSIDE HYDROLASE FAMILY 16 PROTEIN"/>
    <property type="match status" value="1"/>
</dbReference>
<dbReference type="PANTHER" id="PTHR10963">
    <property type="entry name" value="GLYCOSYL HYDROLASE-RELATED"/>
    <property type="match status" value="1"/>
</dbReference>
<dbReference type="Pfam" id="PF00722">
    <property type="entry name" value="Glyco_hydro_16"/>
    <property type="match status" value="1"/>
</dbReference>
<dbReference type="PIRSF" id="PIRSF001097">
    <property type="entry name" value="Agarase"/>
    <property type="match status" value="1"/>
</dbReference>
<dbReference type="SUPFAM" id="SSF49899">
    <property type="entry name" value="Concanavalin A-like lectins/glucanases"/>
    <property type="match status" value="1"/>
</dbReference>
<dbReference type="PROSITE" id="PS01034">
    <property type="entry name" value="GH16_1"/>
    <property type="match status" value="1"/>
</dbReference>
<dbReference type="PROSITE" id="PS51762">
    <property type="entry name" value="GH16_2"/>
    <property type="match status" value="1"/>
</dbReference>
<dbReference type="PROSITE" id="PS51318">
    <property type="entry name" value="TAT"/>
    <property type="match status" value="1"/>
</dbReference>
<reference key="1">
    <citation type="journal article" date="1987" name="Mol. Gen. Genet.">
        <title>The agarase gene (dagA) of Streptomyces coelicolor A3(2): nucleotide sequence and transcriptional analysis.</title>
        <authorList>
            <person name="Buttner M.J."/>
            <person name="Fearnley I.M."/>
            <person name="Bibb M.J."/>
        </authorList>
    </citation>
    <scope>NUCLEOTIDE SEQUENCE [GENOMIC DNA]</scope>
    <scope>PROTEIN SEQUENCE OF 31-61</scope>
    <source>
        <strain>A3(2) / NRRL B-16638</strain>
    </source>
</reference>
<reference key="2">
    <citation type="journal article" date="2002" name="Nature">
        <title>Complete genome sequence of the model actinomycete Streptomyces coelicolor A3(2).</title>
        <authorList>
            <person name="Bentley S.D."/>
            <person name="Chater K.F."/>
            <person name="Cerdeno-Tarraga A.-M."/>
            <person name="Challis G.L."/>
            <person name="Thomson N.R."/>
            <person name="James K.D."/>
            <person name="Harris D.E."/>
            <person name="Quail M.A."/>
            <person name="Kieser H."/>
            <person name="Harper D."/>
            <person name="Bateman A."/>
            <person name="Brown S."/>
            <person name="Chandra G."/>
            <person name="Chen C.W."/>
            <person name="Collins M."/>
            <person name="Cronin A."/>
            <person name="Fraser A."/>
            <person name="Goble A."/>
            <person name="Hidalgo J."/>
            <person name="Hornsby T."/>
            <person name="Howarth S."/>
            <person name="Huang C.-H."/>
            <person name="Kieser T."/>
            <person name="Larke L."/>
            <person name="Murphy L.D."/>
            <person name="Oliver K."/>
            <person name="O'Neil S."/>
            <person name="Rabbinowitsch E."/>
            <person name="Rajandream M.A."/>
            <person name="Rutherford K.M."/>
            <person name="Rutter S."/>
            <person name="Seeger K."/>
            <person name="Saunders D."/>
            <person name="Sharp S."/>
            <person name="Squares R."/>
            <person name="Squares S."/>
            <person name="Taylor K."/>
            <person name="Warren T."/>
            <person name="Wietzorrek A."/>
            <person name="Woodward J.R."/>
            <person name="Barrell B.G."/>
            <person name="Parkhill J."/>
            <person name="Hopwood D.A."/>
        </authorList>
    </citation>
    <scope>NUCLEOTIDE SEQUENCE [LARGE SCALE GENOMIC DNA]</scope>
    <source>
        <strain>ATCC BAA-471 / A3(2) / M145</strain>
    </source>
</reference>